<comment type="function">
    <text evidence="1">NDH-1 shuttles electrons from NADH, via FMN and iron-sulfur (Fe-S) centers, to quinones in the respiratory chain. The immediate electron acceptor for the enzyme in this species is believed to be ubiquinone. Couples the redox reaction to proton translocation (for every two electrons transferred, four hydrogen ions are translocated across the cytoplasmic membrane), and thus conserves the redox energy in a proton gradient. This subunit may bind ubiquinone.</text>
</comment>
<comment type="catalytic activity">
    <reaction evidence="1">
        <text>a quinone + NADH + 5 H(+)(in) = a quinol + NAD(+) + 4 H(+)(out)</text>
        <dbReference type="Rhea" id="RHEA:57888"/>
        <dbReference type="ChEBI" id="CHEBI:15378"/>
        <dbReference type="ChEBI" id="CHEBI:24646"/>
        <dbReference type="ChEBI" id="CHEBI:57540"/>
        <dbReference type="ChEBI" id="CHEBI:57945"/>
        <dbReference type="ChEBI" id="CHEBI:132124"/>
    </reaction>
</comment>
<comment type="subunit">
    <text evidence="1">NDH-1 is composed of 14 different subunits. Subunits NuoA, H, J, K, L, M, N constitute the membrane sector of the complex.</text>
</comment>
<comment type="subcellular location">
    <subcellularLocation>
        <location evidence="1">Cell inner membrane</location>
        <topology evidence="1">Multi-pass membrane protein</topology>
    </subcellularLocation>
</comment>
<comment type="similarity">
    <text evidence="1">Belongs to the complex I subunit 1 family.</text>
</comment>
<accession>A8GY33</accession>
<proteinExistence type="inferred from homology"/>
<feature type="chain" id="PRO_1000067755" description="NADH-quinone oxidoreductase subunit H">
    <location>
        <begin position="1"/>
        <end position="339"/>
    </location>
</feature>
<feature type="transmembrane region" description="Helical" evidence="1">
    <location>
        <begin position="9"/>
        <end position="29"/>
    </location>
</feature>
<feature type="transmembrane region" description="Helical" evidence="1">
    <location>
        <begin position="82"/>
        <end position="102"/>
    </location>
</feature>
<feature type="transmembrane region" description="Helical" evidence="1">
    <location>
        <begin position="115"/>
        <end position="135"/>
    </location>
</feature>
<feature type="transmembrane region" description="Helical" evidence="1">
    <location>
        <begin position="161"/>
        <end position="181"/>
    </location>
</feature>
<feature type="transmembrane region" description="Helical" evidence="1">
    <location>
        <begin position="187"/>
        <end position="207"/>
    </location>
</feature>
<feature type="transmembrane region" description="Helical" evidence="1">
    <location>
        <begin position="235"/>
        <end position="255"/>
    </location>
</feature>
<feature type="transmembrane region" description="Helical" evidence="1">
    <location>
        <begin position="275"/>
        <end position="295"/>
    </location>
</feature>
<feature type="transmembrane region" description="Helical" evidence="1">
    <location>
        <begin position="311"/>
        <end position="331"/>
    </location>
</feature>
<gene>
    <name evidence="1" type="primary">nuoH</name>
    <name type="ordered locus">A1I_07425</name>
</gene>
<organism>
    <name type="scientific">Rickettsia bellii (strain OSU 85-389)</name>
    <dbReference type="NCBI Taxonomy" id="391896"/>
    <lineage>
        <taxon>Bacteria</taxon>
        <taxon>Pseudomonadati</taxon>
        <taxon>Pseudomonadota</taxon>
        <taxon>Alphaproteobacteria</taxon>
        <taxon>Rickettsiales</taxon>
        <taxon>Rickettsiaceae</taxon>
        <taxon>Rickettsieae</taxon>
        <taxon>Rickettsia</taxon>
        <taxon>belli group</taxon>
    </lineage>
</organism>
<evidence type="ECO:0000255" key="1">
    <source>
        <dbReference type="HAMAP-Rule" id="MF_01350"/>
    </source>
</evidence>
<name>NUOH_RICB8</name>
<dbReference type="EC" id="7.1.1.-" evidence="1"/>
<dbReference type="EMBL" id="CP000849">
    <property type="protein sequence ID" value="ABV79783.1"/>
    <property type="molecule type" value="Genomic_DNA"/>
</dbReference>
<dbReference type="RefSeq" id="WP_012152251.1">
    <property type="nucleotide sequence ID" value="NC_009883.1"/>
</dbReference>
<dbReference type="SMR" id="A8GY33"/>
<dbReference type="KEGG" id="rbo:A1I_07425"/>
<dbReference type="HOGENOM" id="CLU_015134_0_1_5"/>
<dbReference type="GO" id="GO:0005886">
    <property type="term" value="C:plasma membrane"/>
    <property type="evidence" value="ECO:0007669"/>
    <property type="project" value="UniProtKB-SubCell"/>
</dbReference>
<dbReference type="GO" id="GO:0003954">
    <property type="term" value="F:NADH dehydrogenase activity"/>
    <property type="evidence" value="ECO:0007669"/>
    <property type="project" value="TreeGrafter"/>
</dbReference>
<dbReference type="GO" id="GO:0016655">
    <property type="term" value="F:oxidoreductase activity, acting on NAD(P)H, quinone or similar compound as acceptor"/>
    <property type="evidence" value="ECO:0007669"/>
    <property type="project" value="UniProtKB-UniRule"/>
</dbReference>
<dbReference type="GO" id="GO:0048038">
    <property type="term" value="F:quinone binding"/>
    <property type="evidence" value="ECO:0007669"/>
    <property type="project" value="UniProtKB-KW"/>
</dbReference>
<dbReference type="GO" id="GO:0009060">
    <property type="term" value="P:aerobic respiration"/>
    <property type="evidence" value="ECO:0007669"/>
    <property type="project" value="TreeGrafter"/>
</dbReference>
<dbReference type="HAMAP" id="MF_01350">
    <property type="entry name" value="NDH1_NuoH"/>
    <property type="match status" value="1"/>
</dbReference>
<dbReference type="InterPro" id="IPR001694">
    <property type="entry name" value="NADH_UbQ_OxRdtase_su1/FPO"/>
</dbReference>
<dbReference type="InterPro" id="IPR018086">
    <property type="entry name" value="NADH_UbQ_OxRdtase_su1_CS"/>
</dbReference>
<dbReference type="NCBIfam" id="NF004741">
    <property type="entry name" value="PRK06076.1-2"/>
    <property type="match status" value="1"/>
</dbReference>
<dbReference type="NCBIfam" id="NF004745">
    <property type="entry name" value="PRK06076.1-6"/>
    <property type="match status" value="1"/>
</dbReference>
<dbReference type="PANTHER" id="PTHR11432">
    <property type="entry name" value="NADH DEHYDROGENASE SUBUNIT 1"/>
    <property type="match status" value="1"/>
</dbReference>
<dbReference type="PANTHER" id="PTHR11432:SF3">
    <property type="entry name" value="NADH-UBIQUINONE OXIDOREDUCTASE CHAIN 1"/>
    <property type="match status" value="1"/>
</dbReference>
<dbReference type="Pfam" id="PF00146">
    <property type="entry name" value="NADHdh"/>
    <property type="match status" value="1"/>
</dbReference>
<dbReference type="PROSITE" id="PS00667">
    <property type="entry name" value="COMPLEX1_ND1_1"/>
    <property type="match status" value="1"/>
</dbReference>
<dbReference type="PROSITE" id="PS00668">
    <property type="entry name" value="COMPLEX1_ND1_2"/>
    <property type="match status" value="1"/>
</dbReference>
<protein>
    <recommendedName>
        <fullName evidence="1">NADH-quinone oxidoreductase subunit H</fullName>
        <ecNumber evidence="1">7.1.1.-</ecNumber>
    </recommendedName>
    <alternativeName>
        <fullName evidence="1">NADH dehydrogenase I subunit H</fullName>
    </alternativeName>
    <alternativeName>
        <fullName evidence="1">NDH-1 subunit H</fullName>
    </alternativeName>
</protein>
<reference key="1">
    <citation type="submission" date="2007-09" db="EMBL/GenBank/DDBJ databases">
        <title>Complete genome sequencing of Rickettsia bellii.</title>
        <authorList>
            <person name="Madan A."/>
            <person name="Lee H."/>
            <person name="Madan A."/>
            <person name="Yoon J.-G."/>
            <person name="Ryu G.-Y."/>
            <person name="Dasch G."/>
            <person name="Ereemeva M."/>
        </authorList>
    </citation>
    <scope>NUCLEOTIDE SEQUENCE [LARGE SCALE GENOMIC DNA]</scope>
    <source>
        <strain>OSU 85-389</strain>
    </source>
</reference>
<sequence length="339" mass="38058">MIELFFEYIFPLIIIALKVVAITIPLILCVAYLTYAERRVIGLMQLRCGPNVVGPFGLLQPIADAVKLLFKEPIIPTNADKILFVLAPMITFILSLIGWAVIPFAKGVVLADINVGVLYILAISSLSVYGIIIAGWASNSKYAFLGAIRSSAQMISYEVSMGLVIITVLLTTGTLNLSQIVEAQRTMPWWIDLMLMPMGVVFFISVLAETNRLPFDLPEAESELVAGYNVEYSSMGFALFFLGEYANMILVSAMTTTFFLGGYLPPFNISWLDCIPGFFWFVFKVGFLLFCFLWIRATLPRYRYDQLMRLGWKVFLPLTLFWVVLVSSVLIYTDHLPNV</sequence>
<keyword id="KW-0997">Cell inner membrane</keyword>
<keyword id="KW-1003">Cell membrane</keyword>
<keyword id="KW-0472">Membrane</keyword>
<keyword id="KW-0520">NAD</keyword>
<keyword id="KW-0874">Quinone</keyword>
<keyword id="KW-1278">Translocase</keyword>
<keyword id="KW-0812">Transmembrane</keyword>
<keyword id="KW-1133">Transmembrane helix</keyword>
<keyword id="KW-0830">Ubiquinone</keyword>